<dbReference type="EMBL" id="CP001185">
    <property type="protein sequence ID" value="ACJ75119.1"/>
    <property type="molecule type" value="Genomic_DNA"/>
</dbReference>
<dbReference type="RefSeq" id="WP_004104467.1">
    <property type="nucleotide sequence ID" value="NC_011653.1"/>
</dbReference>
<dbReference type="SMR" id="B7IGA5"/>
<dbReference type="STRING" id="484019.THA_639"/>
<dbReference type="KEGG" id="taf:THA_639"/>
<dbReference type="eggNOG" id="COG0360">
    <property type="taxonomic scope" value="Bacteria"/>
</dbReference>
<dbReference type="HOGENOM" id="CLU_113441_5_0_0"/>
<dbReference type="OrthoDB" id="9812702at2"/>
<dbReference type="Proteomes" id="UP000002453">
    <property type="component" value="Chromosome"/>
</dbReference>
<dbReference type="GO" id="GO:0005737">
    <property type="term" value="C:cytoplasm"/>
    <property type="evidence" value="ECO:0007669"/>
    <property type="project" value="UniProtKB-ARBA"/>
</dbReference>
<dbReference type="GO" id="GO:1990904">
    <property type="term" value="C:ribonucleoprotein complex"/>
    <property type="evidence" value="ECO:0007669"/>
    <property type="project" value="UniProtKB-KW"/>
</dbReference>
<dbReference type="GO" id="GO:0005840">
    <property type="term" value="C:ribosome"/>
    <property type="evidence" value="ECO:0007669"/>
    <property type="project" value="UniProtKB-KW"/>
</dbReference>
<dbReference type="GO" id="GO:0070181">
    <property type="term" value="F:small ribosomal subunit rRNA binding"/>
    <property type="evidence" value="ECO:0007669"/>
    <property type="project" value="TreeGrafter"/>
</dbReference>
<dbReference type="GO" id="GO:0003735">
    <property type="term" value="F:structural constituent of ribosome"/>
    <property type="evidence" value="ECO:0007669"/>
    <property type="project" value="InterPro"/>
</dbReference>
<dbReference type="GO" id="GO:0006412">
    <property type="term" value="P:translation"/>
    <property type="evidence" value="ECO:0007669"/>
    <property type="project" value="UniProtKB-UniRule"/>
</dbReference>
<dbReference type="CDD" id="cd00473">
    <property type="entry name" value="bS6"/>
    <property type="match status" value="1"/>
</dbReference>
<dbReference type="Gene3D" id="3.30.70.60">
    <property type="match status" value="1"/>
</dbReference>
<dbReference type="HAMAP" id="MF_00360">
    <property type="entry name" value="Ribosomal_bS6"/>
    <property type="match status" value="1"/>
</dbReference>
<dbReference type="InterPro" id="IPR000529">
    <property type="entry name" value="Ribosomal_bS6"/>
</dbReference>
<dbReference type="InterPro" id="IPR035980">
    <property type="entry name" value="Ribosomal_bS6_sf"/>
</dbReference>
<dbReference type="InterPro" id="IPR020814">
    <property type="entry name" value="Ribosomal_S6_plastid/chlpt"/>
</dbReference>
<dbReference type="InterPro" id="IPR014717">
    <property type="entry name" value="Transl_elong_EF1B/ribsomal_bS6"/>
</dbReference>
<dbReference type="NCBIfam" id="TIGR00166">
    <property type="entry name" value="S6"/>
    <property type="match status" value="1"/>
</dbReference>
<dbReference type="PANTHER" id="PTHR21011">
    <property type="entry name" value="MITOCHONDRIAL 28S RIBOSOMAL PROTEIN S6"/>
    <property type="match status" value="1"/>
</dbReference>
<dbReference type="PANTHER" id="PTHR21011:SF1">
    <property type="entry name" value="SMALL RIBOSOMAL SUBUNIT PROTEIN BS6M"/>
    <property type="match status" value="1"/>
</dbReference>
<dbReference type="Pfam" id="PF01250">
    <property type="entry name" value="Ribosomal_S6"/>
    <property type="match status" value="1"/>
</dbReference>
<dbReference type="SUPFAM" id="SSF54995">
    <property type="entry name" value="Ribosomal protein S6"/>
    <property type="match status" value="1"/>
</dbReference>
<keyword id="KW-1185">Reference proteome</keyword>
<keyword id="KW-0687">Ribonucleoprotein</keyword>
<keyword id="KW-0689">Ribosomal protein</keyword>
<keyword id="KW-0694">RNA-binding</keyword>
<keyword id="KW-0699">rRNA-binding</keyword>
<evidence type="ECO:0000255" key="1">
    <source>
        <dbReference type="HAMAP-Rule" id="MF_00360"/>
    </source>
</evidence>
<evidence type="ECO:0000305" key="2"/>
<gene>
    <name evidence="1" type="primary">rpsF</name>
    <name type="ordered locus">THA_639</name>
</gene>
<reference key="1">
    <citation type="journal article" date="2009" name="J. Bacteriol.">
        <title>The genome of Thermosipho africanus TCF52B: lateral genetic connections to the Firmicutes and Archaea.</title>
        <authorList>
            <person name="Nesboe C.L."/>
            <person name="Bapteste E."/>
            <person name="Curtis B."/>
            <person name="Dahle H."/>
            <person name="Lopez P."/>
            <person name="Macleod D."/>
            <person name="Dlutek M."/>
            <person name="Bowman S."/>
            <person name="Zhaxybayeva O."/>
            <person name="Birkeland N.-K."/>
            <person name="Doolittle W.F."/>
        </authorList>
    </citation>
    <scope>NUCLEOTIDE SEQUENCE [LARGE SCALE GENOMIC DNA]</scope>
    <source>
        <strain>TCF52B</strain>
    </source>
</reference>
<accession>B7IGA5</accession>
<comment type="function">
    <text evidence="1">Binds together with bS18 to 16S ribosomal RNA.</text>
</comment>
<comment type="similarity">
    <text evidence="1">Belongs to the bacterial ribosomal protein bS6 family.</text>
</comment>
<feature type="chain" id="PRO_1000120815" description="Small ribosomal subunit protein bS6">
    <location>
        <begin position="1"/>
        <end position="119"/>
    </location>
</feature>
<protein>
    <recommendedName>
        <fullName evidence="1">Small ribosomal subunit protein bS6</fullName>
    </recommendedName>
    <alternativeName>
        <fullName evidence="2">30S ribosomal protein S6</fullName>
    </alternativeName>
</protein>
<name>RS6_THEAB</name>
<sequence>MRIYETMFIIKPDIAEEEREKIANGVVEFLKEKLNAQIDNVDRWGIRKTAYPLKKYNEADYTVVYFRATGENLNELEMYFKVRPEFLRWQTFRRIDLEKKERKTAKKVETVENTEKVEE</sequence>
<proteinExistence type="inferred from homology"/>
<organism>
    <name type="scientific">Thermosipho africanus (strain TCF52B)</name>
    <dbReference type="NCBI Taxonomy" id="484019"/>
    <lineage>
        <taxon>Bacteria</taxon>
        <taxon>Thermotogati</taxon>
        <taxon>Thermotogota</taxon>
        <taxon>Thermotogae</taxon>
        <taxon>Thermotogales</taxon>
        <taxon>Fervidobacteriaceae</taxon>
        <taxon>Thermosipho</taxon>
    </lineage>
</organism>